<keyword id="KW-0963">Cytoplasm</keyword>
<keyword id="KW-0456">Lyase</keyword>
<keyword id="KW-0585">Phenylalanine catabolism</keyword>
<keyword id="KW-0587">Phenylpropanoid metabolism</keyword>
<proteinExistence type="evidence at transcript level"/>
<comment type="function">
    <text evidence="2">This is a key enzyme of plant metabolism catalyzing the first reaction in the biosynthesis from L-phenylalanine of a wide variety of natural products based on the phenylpropane skeleton.</text>
</comment>
<comment type="catalytic activity">
    <reaction evidence="2">
        <text>L-phenylalanine = (E)-cinnamate + NH4(+)</text>
        <dbReference type="Rhea" id="RHEA:21384"/>
        <dbReference type="ChEBI" id="CHEBI:15669"/>
        <dbReference type="ChEBI" id="CHEBI:28938"/>
        <dbReference type="ChEBI" id="CHEBI:58095"/>
        <dbReference type="EC" id="4.3.1.24"/>
    </reaction>
</comment>
<comment type="pathway">
    <text evidence="5">Phenylpropanoid metabolism; trans-cinnamate biosynthesis; trans-cinnamate from L-phenylalanine: step 1/1.</text>
</comment>
<comment type="subunit">
    <text evidence="2">Homotetramer.</text>
</comment>
<comment type="subcellular location">
    <subcellularLocation>
        <location evidence="5">Cytoplasm</location>
    </subcellularLocation>
</comment>
<comment type="PTM">
    <text evidence="3">Contains an active site 4-methylidene-imidazol-5-one (MIO), which is formed autocatalytically by cyclization and dehydration of residues Ala-Ser-Gly.</text>
</comment>
<comment type="similarity">
    <text evidence="5">Belongs to the PAL/histidase family.</text>
</comment>
<accession>P45730</accession>
<dbReference type="EC" id="4.3.1.24" evidence="2"/>
<dbReference type="EMBL" id="L11747">
    <property type="protein sequence ID" value="AAA33805.1"/>
    <property type="molecule type" value="mRNA"/>
</dbReference>
<dbReference type="SMR" id="P45730"/>
<dbReference type="eggNOG" id="KOG0222">
    <property type="taxonomic scope" value="Eukaryota"/>
</dbReference>
<dbReference type="UniPathway" id="UPA00713">
    <property type="reaction ID" value="UER00725"/>
</dbReference>
<dbReference type="ExpressionAtlas" id="P45730">
    <property type="expression patterns" value="baseline and differential"/>
</dbReference>
<dbReference type="GO" id="GO:0005737">
    <property type="term" value="C:cytoplasm"/>
    <property type="evidence" value="ECO:0007669"/>
    <property type="project" value="UniProtKB-SubCell"/>
</dbReference>
<dbReference type="GO" id="GO:0045548">
    <property type="term" value="F:phenylalanine ammonia-lyase activity"/>
    <property type="evidence" value="ECO:0007669"/>
    <property type="project" value="UniProtKB-EC"/>
</dbReference>
<dbReference type="GO" id="GO:0009800">
    <property type="term" value="P:cinnamic acid biosynthetic process"/>
    <property type="evidence" value="ECO:0007669"/>
    <property type="project" value="UniProtKB-UniPathway"/>
</dbReference>
<dbReference type="GO" id="GO:0006559">
    <property type="term" value="P:L-phenylalanine catabolic process"/>
    <property type="evidence" value="ECO:0007669"/>
    <property type="project" value="UniProtKB-KW"/>
</dbReference>
<dbReference type="CDD" id="cd00332">
    <property type="entry name" value="PAL-HAL"/>
    <property type="match status" value="1"/>
</dbReference>
<dbReference type="FunFam" id="1.10.274.20:FF:000001">
    <property type="entry name" value="Phenylalanine ammonia-lyase"/>
    <property type="match status" value="1"/>
</dbReference>
<dbReference type="FunFam" id="1.10.275.10:FF:000009">
    <property type="entry name" value="Phenylalanine ammonia-lyase"/>
    <property type="match status" value="1"/>
</dbReference>
<dbReference type="FunFam" id="1.20.200.10:FF:000009">
    <property type="entry name" value="Phenylalanine ammonia-lyase"/>
    <property type="match status" value="1"/>
</dbReference>
<dbReference type="Gene3D" id="1.20.200.10">
    <property type="entry name" value="Fumarase/aspartase (Central domain)"/>
    <property type="match status" value="1"/>
</dbReference>
<dbReference type="Gene3D" id="1.10.275.10">
    <property type="entry name" value="Fumarase/aspartase (N-terminal domain)"/>
    <property type="match status" value="1"/>
</dbReference>
<dbReference type="Gene3D" id="1.10.274.20">
    <property type="entry name" value="Phenylalanine ammonia-lyase 1, domain 3"/>
    <property type="match status" value="1"/>
</dbReference>
<dbReference type="InterPro" id="IPR001106">
    <property type="entry name" value="Aromatic_Lyase"/>
</dbReference>
<dbReference type="InterPro" id="IPR024083">
    <property type="entry name" value="Fumarase/histidase_N"/>
</dbReference>
<dbReference type="InterPro" id="IPR008948">
    <property type="entry name" value="L-Aspartase-like"/>
</dbReference>
<dbReference type="InterPro" id="IPR022313">
    <property type="entry name" value="Phe/His_NH3-lyase_AS"/>
</dbReference>
<dbReference type="InterPro" id="IPR005922">
    <property type="entry name" value="Phe_NH3-lyase"/>
</dbReference>
<dbReference type="InterPro" id="IPR023144">
    <property type="entry name" value="Phe_NH3-lyase_shielding_dom_sf"/>
</dbReference>
<dbReference type="NCBIfam" id="TIGR01226">
    <property type="entry name" value="phe_am_lyase"/>
    <property type="match status" value="1"/>
</dbReference>
<dbReference type="PANTHER" id="PTHR10362">
    <property type="entry name" value="HISTIDINE AMMONIA-LYASE"/>
    <property type="match status" value="1"/>
</dbReference>
<dbReference type="Pfam" id="PF00221">
    <property type="entry name" value="Lyase_aromatic"/>
    <property type="match status" value="1"/>
</dbReference>
<dbReference type="SUPFAM" id="SSF48557">
    <property type="entry name" value="L-aspartase-like"/>
    <property type="match status" value="1"/>
</dbReference>
<dbReference type="PROSITE" id="PS00488">
    <property type="entry name" value="PAL_HISTIDASE"/>
    <property type="match status" value="1"/>
</dbReference>
<sequence length="715" mass="77919">METVTKNGYQNGSLESLCVNQRDPLSWGVAAEAMKGSHLDEVKRMVADYRKPVVKLGGETLTIAQVASIAGHDTGDVKVELSESARPGVKASSDWVMDSMDKGTDSYGVTTGFGATSHRRTKQGGALQKELIRFLNAGIFGNGTETCHTLPHSATRAAMLVRINTLLQGYSGIRFEILEAITRLLNNNITPCLPLRGTITASGDLVPLSYIAGLLTGRPNSKATGPTGEVLDAAEAFKAAGIESGFFELQPKEGLALVNGTAVGSGLASMVLFETNVLAVLSELLSAIFAEVMNGKPEFTDHLTHKLKHHPGQIEAAAIMEHILDGSAYMKAAKKLHETDPLQKPKQDRYALRTSPQWLGPQIEVIRFSTKSIEREINSVNDNPLIDVSRNKAIHGGNFQGTPIGVSMDNVRLAIASIGKLLFAQFSELVNDFYNNGLPSNLTASRNPSLDYGFKGAEIAMASYCSELQYLANPVTTHVQSAEQHNQDVNSLGLISSRKTAEAVDILKLMSTTFLVALCQAIDLRHLEENLKSAVKNTVSQVSKRVLTTGANGELHPSRFCEKELLKVVDREYVFAYVDDPCSATYPLMQKLRQVFVDHALENGENEKNFSTSVFQKIEAFEEELKALLPKEVESARAAYDSGNSAIDNKIKECRSYPLYKFVREELGTVLLTGEKVQSPGEEFDKVFTAMCQGKIIDPMLECLGEWNGSPLPIC</sequence>
<organism>
    <name type="scientific">Populus trichocarpa</name>
    <name type="common">Western balsam poplar</name>
    <name type="synonym">Populus balsamifera subsp. trichocarpa</name>
    <dbReference type="NCBI Taxonomy" id="3694"/>
    <lineage>
        <taxon>Eukaryota</taxon>
        <taxon>Viridiplantae</taxon>
        <taxon>Streptophyta</taxon>
        <taxon>Embryophyta</taxon>
        <taxon>Tracheophyta</taxon>
        <taxon>Spermatophyta</taxon>
        <taxon>Magnoliopsida</taxon>
        <taxon>eudicotyledons</taxon>
        <taxon>Gunneridae</taxon>
        <taxon>Pentapetalae</taxon>
        <taxon>rosids</taxon>
        <taxon>fabids</taxon>
        <taxon>Malpighiales</taxon>
        <taxon>Salicaceae</taxon>
        <taxon>Saliceae</taxon>
        <taxon>Populus</taxon>
    </lineage>
</organism>
<evidence type="ECO:0000250" key="1">
    <source>
        <dbReference type="UniProtKB" id="P11544"/>
    </source>
</evidence>
<evidence type="ECO:0000250" key="2">
    <source>
        <dbReference type="UniProtKB" id="P24481"/>
    </source>
</evidence>
<evidence type="ECO:0000250" key="3">
    <source>
        <dbReference type="UniProtKB" id="Q68G84"/>
    </source>
</evidence>
<evidence type="ECO:0000255" key="4">
    <source>
        <dbReference type="PROSITE-ProRule" id="PRU10122"/>
    </source>
</evidence>
<evidence type="ECO:0000305" key="5"/>
<gene>
    <name type="primary">PAL</name>
</gene>
<protein>
    <recommendedName>
        <fullName>Phenylalanine ammonia-lyase</fullName>
        <ecNumber evidence="2">4.3.1.24</ecNumber>
    </recommendedName>
</protein>
<reference key="1">
    <citation type="journal article" date="1993" name="Plant Physiol.">
        <title>Structure, inheritance, and expression of hybrid poplar (Populus trichocarpa x Populus deltoides) phenylalanine ammonia-lyase genes.</title>
        <authorList>
            <person name="Subramaniam R."/>
            <person name="Reinold S."/>
            <person name="Molitor E.K."/>
            <person name="Douglas C.J."/>
        </authorList>
    </citation>
    <scope>NUCLEOTIDE SEQUENCE [MRNA]</scope>
    <source>
        <strain>P.trichocarpa X P.deltoides</strain>
        <tissue>Leaf</tissue>
    </source>
</reference>
<name>PALY_POPTR</name>
<feature type="chain" id="PRO_0000215416" description="Phenylalanine ammonia-lyase">
    <location>
        <begin position="1"/>
        <end position="715"/>
    </location>
</feature>
<feature type="active site" description="Proton donor/acceptor" evidence="3">
    <location>
        <position position="107"/>
    </location>
</feature>
<feature type="binding site" evidence="3">
    <location>
        <position position="259"/>
    </location>
    <ligand>
        <name>(E)-cinnamate</name>
        <dbReference type="ChEBI" id="CHEBI:15669"/>
    </ligand>
</feature>
<feature type="binding site" evidence="3">
    <location>
        <position position="347"/>
    </location>
    <ligand>
        <name>(E)-cinnamate</name>
        <dbReference type="ChEBI" id="CHEBI:15669"/>
    </ligand>
</feature>
<feature type="binding site" evidence="3">
    <location>
        <position position="353"/>
    </location>
    <ligand>
        <name>(E)-cinnamate</name>
        <dbReference type="ChEBI" id="CHEBI:15669"/>
    </ligand>
</feature>
<feature type="binding site" evidence="3">
    <location>
        <position position="383"/>
    </location>
    <ligand>
        <name>(E)-cinnamate</name>
        <dbReference type="ChEBI" id="CHEBI:15669"/>
    </ligand>
</feature>
<feature type="binding site" evidence="1">
    <location>
        <position position="455"/>
    </location>
    <ligand>
        <name>(E)-cinnamate</name>
        <dbReference type="ChEBI" id="CHEBI:15669"/>
    </ligand>
</feature>
<feature type="binding site" evidence="1">
    <location>
        <position position="483"/>
    </location>
    <ligand>
        <name>(E)-cinnamate</name>
        <dbReference type="ChEBI" id="CHEBI:15669"/>
    </ligand>
</feature>
<feature type="binding site" evidence="3">
    <location>
        <position position="486"/>
    </location>
    <ligand>
        <name>(E)-cinnamate</name>
        <dbReference type="ChEBI" id="CHEBI:15669"/>
    </ligand>
</feature>
<feature type="modified residue" description="2,3-didehydroalanine (Ser)" evidence="4">
    <location>
        <position position="202"/>
    </location>
</feature>
<feature type="cross-link" description="5-imidazolinone (Ala-Gly)" evidence="3">
    <location>
        <begin position="201"/>
        <end position="203"/>
    </location>
</feature>